<organism>
    <name type="scientific">Xylella fastidiosa (strain M12)</name>
    <dbReference type="NCBI Taxonomy" id="405440"/>
    <lineage>
        <taxon>Bacteria</taxon>
        <taxon>Pseudomonadati</taxon>
        <taxon>Pseudomonadota</taxon>
        <taxon>Gammaproteobacteria</taxon>
        <taxon>Lysobacterales</taxon>
        <taxon>Lysobacteraceae</taxon>
        <taxon>Xylella</taxon>
    </lineage>
</organism>
<proteinExistence type="inferred from homology"/>
<feature type="chain" id="PRO_1000125778" description="Glucose-6-phosphate isomerase">
    <location>
        <begin position="1"/>
        <end position="502"/>
    </location>
</feature>
<feature type="active site" description="Proton donor" evidence="1">
    <location>
        <position position="331"/>
    </location>
</feature>
<feature type="active site" evidence="1">
    <location>
        <position position="362"/>
    </location>
</feature>
<feature type="active site" evidence="1">
    <location>
        <position position="471"/>
    </location>
</feature>
<evidence type="ECO:0000255" key="1">
    <source>
        <dbReference type="HAMAP-Rule" id="MF_00473"/>
    </source>
</evidence>
<comment type="function">
    <text evidence="1">Catalyzes the reversible isomerization of glucose-6-phosphate to fructose-6-phosphate.</text>
</comment>
<comment type="catalytic activity">
    <reaction evidence="1">
        <text>alpha-D-glucose 6-phosphate = beta-D-fructose 6-phosphate</text>
        <dbReference type="Rhea" id="RHEA:11816"/>
        <dbReference type="ChEBI" id="CHEBI:57634"/>
        <dbReference type="ChEBI" id="CHEBI:58225"/>
        <dbReference type="EC" id="5.3.1.9"/>
    </reaction>
</comment>
<comment type="pathway">
    <text evidence="1">Carbohydrate biosynthesis; gluconeogenesis.</text>
</comment>
<comment type="pathway">
    <text evidence="1">Carbohydrate degradation; glycolysis; D-glyceraldehyde 3-phosphate and glycerone phosphate from D-glucose: step 2/4.</text>
</comment>
<comment type="subcellular location">
    <subcellularLocation>
        <location evidence="1">Cytoplasm</location>
    </subcellularLocation>
</comment>
<comment type="similarity">
    <text evidence="1">Belongs to the GPI family.</text>
</comment>
<accession>B0U1Q5</accession>
<reference key="1">
    <citation type="journal article" date="2010" name="J. Bacteriol.">
        <title>Whole genome sequences of two Xylella fastidiosa strains (M12 and M23) causing almond leaf scorch disease in California.</title>
        <authorList>
            <person name="Chen J."/>
            <person name="Xie G."/>
            <person name="Han S."/>
            <person name="Chertkov O."/>
            <person name="Sims D."/>
            <person name="Civerolo E.L."/>
        </authorList>
    </citation>
    <scope>NUCLEOTIDE SEQUENCE [LARGE SCALE GENOMIC DNA]</scope>
    <source>
        <strain>M12</strain>
    </source>
</reference>
<protein>
    <recommendedName>
        <fullName evidence="1">Glucose-6-phosphate isomerase</fullName>
        <shortName evidence="1">GPI</shortName>
        <ecNumber evidence="1">5.3.1.9</ecNumber>
    </recommendedName>
    <alternativeName>
        <fullName evidence="1">Phosphoglucose isomerase</fullName>
        <shortName evidence="1">PGI</shortName>
    </alternativeName>
    <alternativeName>
        <fullName evidence="1">Phosphohexose isomerase</fullName>
        <shortName evidence="1">PHI</shortName>
    </alternativeName>
</protein>
<gene>
    <name evidence="1" type="primary">pgi</name>
    <name type="ordered locus">Xfasm12_0200</name>
</gene>
<dbReference type="EC" id="5.3.1.9" evidence="1"/>
<dbReference type="EMBL" id="CP000941">
    <property type="protein sequence ID" value="ACA11233.1"/>
    <property type="molecule type" value="Genomic_DNA"/>
</dbReference>
<dbReference type="RefSeq" id="WP_004086271.1">
    <property type="nucleotide sequence ID" value="NC_010513.1"/>
</dbReference>
<dbReference type="SMR" id="B0U1Q5"/>
<dbReference type="KEGG" id="xfm:Xfasm12_0200"/>
<dbReference type="HOGENOM" id="CLU_017947_3_1_6"/>
<dbReference type="UniPathway" id="UPA00109">
    <property type="reaction ID" value="UER00181"/>
</dbReference>
<dbReference type="UniPathway" id="UPA00138"/>
<dbReference type="GO" id="GO:0005829">
    <property type="term" value="C:cytosol"/>
    <property type="evidence" value="ECO:0007669"/>
    <property type="project" value="TreeGrafter"/>
</dbReference>
<dbReference type="GO" id="GO:0097367">
    <property type="term" value="F:carbohydrate derivative binding"/>
    <property type="evidence" value="ECO:0007669"/>
    <property type="project" value="InterPro"/>
</dbReference>
<dbReference type="GO" id="GO:0004347">
    <property type="term" value="F:glucose-6-phosphate isomerase activity"/>
    <property type="evidence" value="ECO:0007669"/>
    <property type="project" value="UniProtKB-UniRule"/>
</dbReference>
<dbReference type="GO" id="GO:0048029">
    <property type="term" value="F:monosaccharide binding"/>
    <property type="evidence" value="ECO:0007669"/>
    <property type="project" value="TreeGrafter"/>
</dbReference>
<dbReference type="GO" id="GO:0006094">
    <property type="term" value="P:gluconeogenesis"/>
    <property type="evidence" value="ECO:0007669"/>
    <property type="project" value="UniProtKB-UniRule"/>
</dbReference>
<dbReference type="GO" id="GO:0051156">
    <property type="term" value="P:glucose 6-phosphate metabolic process"/>
    <property type="evidence" value="ECO:0007669"/>
    <property type="project" value="TreeGrafter"/>
</dbReference>
<dbReference type="GO" id="GO:0006096">
    <property type="term" value="P:glycolytic process"/>
    <property type="evidence" value="ECO:0007669"/>
    <property type="project" value="UniProtKB-UniRule"/>
</dbReference>
<dbReference type="CDD" id="cd05015">
    <property type="entry name" value="SIS_PGI_1"/>
    <property type="match status" value="1"/>
</dbReference>
<dbReference type="CDD" id="cd05016">
    <property type="entry name" value="SIS_PGI_2"/>
    <property type="match status" value="1"/>
</dbReference>
<dbReference type="Gene3D" id="1.10.1390.10">
    <property type="match status" value="1"/>
</dbReference>
<dbReference type="Gene3D" id="3.40.50.10490">
    <property type="entry name" value="Glucose-6-phosphate isomerase like protein, domain 1"/>
    <property type="match status" value="2"/>
</dbReference>
<dbReference type="HAMAP" id="MF_00473">
    <property type="entry name" value="G6P_isomerase"/>
    <property type="match status" value="1"/>
</dbReference>
<dbReference type="InterPro" id="IPR001672">
    <property type="entry name" value="G6P_Isomerase"/>
</dbReference>
<dbReference type="InterPro" id="IPR023096">
    <property type="entry name" value="G6P_Isomerase_C"/>
</dbReference>
<dbReference type="InterPro" id="IPR018189">
    <property type="entry name" value="Phosphoglucose_isomerase_CS"/>
</dbReference>
<dbReference type="InterPro" id="IPR046348">
    <property type="entry name" value="SIS_dom_sf"/>
</dbReference>
<dbReference type="InterPro" id="IPR035476">
    <property type="entry name" value="SIS_PGI_1"/>
</dbReference>
<dbReference type="InterPro" id="IPR035482">
    <property type="entry name" value="SIS_PGI_2"/>
</dbReference>
<dbReference type="NCBIfam" id="NF001211">
    <property type="entry name" value="PRK00179.1"/>
    <property type="match status" value="1"/>
</dbReference>
<dbReference type="PANTHER" id="PTHR11469">
    <property type="entry name" value="GLUCOSE-6-PHOSPHATE ISOMERASE"/>
    <property type="match status" value="1"/>
</dbReference>
<dbReference type="PANTHER" id="PTHR11469:SF1">
    <property type="entry name" value="GLUCOSE-6-PHOSPHATE ISOMERASE"/>
    <property type="match status" value="1"/>
</dbReference>
<dbReference type="Pfam" id="PF00342">
    <property type="entry name" value="PGI"/>
    <property type="match status" value="1"/>
</dbReference>
<dbReference type="PRINTS" id="PR00662">
    <property type="entry name" value="G6PISOMERASE"/>
</dbReference>
<dbReference type="SUPFAM" id="SSF53697">
    <property type="entry name" value="SIS domain"/>
    <property type="match status" value="1"/>
</dbReference>
<dbReference type="PROSITE" id="PS00765">
    <property type="entry name" value="P_GLUCOSE_ISOMERASE_1"/>
    <property type="match status" value="1"/>
</dbReference>
<dbReference type="PROSITE" id="PS00174">
    <property type="entry name" value="P_GLUCOSE_ISOMERASE_2"/>
    <property type="match status" value="1"/>
</dbReference>
<dbReference type="PROSITE" id="PS51463">
    <property type="entry name" value="P_GLUCOSE_ISOMERASE_3"/>
    <property type="match status" value="1"/>
</dbReference>
<name>G6PI_XYLFM</name>
<sequence>MHNGFDALQLHANRLRGVTIPDLLAAELKRPEQYARQVGPLYFNFARQKYDCVALEALFALARNHNVTGAFQRMFCGEQVNVTEGRAVLHTALRGDLSGTSVAVAAYTAAAKVRERMYALIAGLDASEVTDIVSVGIGGSDLGPRLVVDALRPISQGRFRVHFVSNVDGAAMRRTLDMLDPSRTAGILISKTFGTQETLLNGRILYDWLGGSERLYAVSANPERAVHAFDIVPTQVLPIWDWVGGRYSLWSAVGFPIALAIGSQRFEELLAGAAEFDAYALRVPLEENVAVLHGLTAVWNRNFLGCATYAVMAYDQRLALLPAYLQQLVMESLGKRVKCDGTPVDRDTVPVWWGGVGTDVQHSFFQALHQGTNIVPADFIGTIRNDDLYTENHFALNANLLAQIEVLANGQLSDDPHRVYPGGNPSTLILLDALTPQALGGLIAMYEHSVYVQSVIWGINAFDQFGVELGKHLAVQLLPALKGESVEVVDPVTRAVLVRLRG</sequence>
<keyword id="KW-0963">Cytoplasm</keyword>
<keyword id="KW-0312">Gluconeogenesis</keyword>
<keyword id="KW-0324">Glycolysis</keyword>
<keyword id="KW-0413">Isomerase</keyword>